<dbReference type="EMBL" id="CR858541">
    <property type="protein sequence ID" value="CAH90768.1"/>
    <property type="molecule type" value="mRNA"/>
</dbReference>
<dbReference type="SMR" id="Q5RBU2"/>
<dbReference type="FunCoup" id="Q5RBU2">
    <property type="interactions" value="1248"/>
</dbReference>
<dbReference type="STRING" id="9601.ENSPPYP00000007658"/>
<dbReference type="eggNOG" id="KOG4548">
    <property type="taxonomic scope" value="Eukaryota"/>
</dbReference>
<dbReference type="InParanoid" id="Q5RBU2"/>
<dbReference type="Proteomes" id="UP000001595">
    <property type="component" value="Unplaced"/>
</dbReference>
<dbReference type="GO" id="GO:0005762">
    <property type="term" value="C:mitochondrial large ribosomal subunit"/>
    <property type="evidence" value="ECO:0000250"/>
    <property type="project" value="UniProtKB"/>
</dbReference>
<dbReference type="GO" id="GO:0003735">
    <property type="term" value="F:structural constituent of ribosome"/>
    <property type="evidence" value="ECO:0007669"/>
    <property type="project" value="InterPro"/>
</dbReference>
<dbReference type="CDD" id="cd04661">
    <property type="entry name" value="NUDIX_MRP_L46"/>
    <property type="match status" value="1"/>
</dbReference>
<dbReference type="FunFam" id="3.90.79.10:FF:000018">
    <property type="entry name" value="39S ribosomal protein L46, mitochondrial"/>
    <property type="match status" value="1"/>
</dbReference>
<dbReference type="Gene3D" id="3.90.79.10">
    <property type="entry name" value="Nucleoside Triphosphate Pyrophosphohydrolase"/>
    <property type="match status" value="1"/>
</dbReference>
<dbReference type="InterPro" id="IPR015797">
    <property type="entry name" value="NUDIX_hydrolase-like_dom_sf"/>
</dbReference>
<dbReference type="InterPro" id="IPR000086">
    <property type="entry name" value="NUDIX_hydrolase_dom"/>
</dbReference>
<dbReference type="InterPro" id="IPR040008">
    <property type="entry name" value="Ribosomal_mL46"/>
</dbReference>
<dbReference type="InterPro" id="IPR021757">
    <property type="entry name" value="Ribosomal_mL46_N"/>
</dbReference>
<dbReference type="InterPro" id="IPR033650">
    <property type="entry name" value="Ribosomal_mL46_NUDIX"/>
</dbReference>
<dbReference type="PANTHER" id="PTHR13124">
    <property type="entry name" value="39S RIBOSOMAL PROTEIN L46, MITOCHONDRIAL PRECURSOR-RELATED"/>
    <property type="match status" value="1"/>
</dbReference>
<dbReference type="PANTHER" id="PTHR13124:SF12">
    <property type="entry name" value="LARGE RIBOSOMAL SUBUNIT PROTEIN ML46"/>
    <property type="match status" value="1"/>
</dbReference>
<dbReference type="Pfam" id="PF11788">
    <property type="entry name" value="MRP-L46"/>
    <property type="match status" value="1"/>
</dbReference>
<dbReference type="Pfam" id="PF00293">
    <property type="entry name" value="NUDIX"/>
    <property type="match status" value="1"/>
</dbReference>
<dbReference type="SUPFAM" id="SSF55811">
    <property type="entry name" value="Nudix"/>
    <property type="match status" value="1"/>
</dbReference>
<gene>
    <name type="primary">MRPL46</name>
</gene>
<proteinExistence type="evidence at transcript level"/>
<reference key="1">
    <citation type="submission" date="2004-11" db="EMBL/GenBank/DDBJ databases">
        <authorList>
            <consortium name="The German cDNA consortium"/>
        </authorList>
    </citation>
    <scope>NUCLEOTIDE SEQUENCE [LARGE SCALE MRNA]</scope>
    <source>
        <tissue>Kidney</tissue>
    </source>
</reference>
<keyword id="KW-0007">Acetylation</keyword>
<keyword id="KW-0496">Mitochondrion</keyword>
<keyword id="KW-1185">Reference proteome</keyword>
<keyword id="KW-0687">Ribonucleoprotein</keyword>
<keyword id="KW-0689">Ribosomal protein</keyword>
<keyword id="KW-0809">Transit peptide</keyword>
<name>RM46_PONAB</name>
<comment type="subunit">
    <text evidence="1">Component of the mitochondrial ribosome large subunit (39S) which comprises a 16S rRNA and about 50 distinct proteins.</text>
</comment>
<comment type="subcellular location">
    <subcellularLocation>
        <location evidence="1">Mitochondrion</location>
    </subcellularLocation>
</comment>
<comment type="similarity">
    <text evidence="3">Belongs to the mitochondrion-specific ribosomal protein mL46 family.</text>
</comment>
<sequence length="279" mass="31654">MAAPVRRTLLGVAGGWRRFERLRAGSLSSRSLALAAAPSSNGSPWRLLGALCLQRPPAVSKPLTPFQEEMASLLQQIEIERSLYSDHELRALDENQRLAGKKADLYDEEDEEDILLAQDLEDMWEQTFLQFKLGARITEADEKNDRTSLNRKLDRNLVLLVREKFGDQDVWILPQTEWQPGETLRGTAERTLATLSENNMEAKFLGNAPCGHYTFKFPQAMRTESNLGAKVFFFKALLLTGDFSQAGNKGHHVWVTKDELGDYLKPKYLAQVRRFLSDL</sequence>
<feature type="transit peptide" description="Mitochondrion" evidence="2">
    <location>
        <begin position="1"/>
        <end status="unknown"/>
    </location>
</feature>
<feature type="chain" id="PRO_0000273555" description="Large ribosomal subunit protein mL46">
    <location>
        <begin status="unknown"/>
        <end position="279"/>
    </location>
</feature>
<feature type="modified residue" description="N6-acetyllysine" evidence="1">
    <location>
        <position position="230"/>
    </location>
</feature>
<evidence type="ECO:0000250" key="1">
    <source>
        <dbReference type="UniProtKB" id="Q9H2W6"/>
    </source>
</evidence>
<evidence type="ECO:0000255" key="2"/>
<evidence type="ECO:0000305" key="3"/>
<accession>Q5RBU2</accession>
<protein>
    <recommendedName>
        <fullName evidence="3">Large ribosomal subunit protein mL46</fullName>
    </recommendedName>
    <alternativeName>
        <fullName>39S ribosomal protein L46, mitochondrial</fullName>
        <shortName>L46mt</shortName>
        <shortName>MRP-L46</shortName>
    </alternativeName>
</protein>
<organism>
    <name type="scientific">Pongo abelii</name>
    <name type="common">Sumatran orangutan</name>
    <name type="synonym">Pongo pygmaeus abelii</name>
    <dbReference type="NCBI Taxonomy" id="9601"/>
    <lineage>
        <taxon>Eukaryota</taxon>
        <taxon>Metazoa</taxon>
        <taxon>Chordata</taxon>
        <taxon>Craniata</taxon>
        <taxon>Vertebrata</taxon>
        <taxon>Euteleostomi</taxon>
        <taxon>Mammalia</taxon>
        <taxon>Eutheria</taxon>
        <taxon>Euarchontoglires</taxon>
        <taxon>Primates</taxon>
        <taxon>Haplorrhini</taxon>
        <taxon>Catarrhini</taxon>
        <taxon>Hominidae</taxon>
        <taxon>Pongo</taxon>
    </lineage>
</organism>